<sequence>MKELDQILEKCAEEIDPLSHEIAERIRKLKNLPKDEMFLEYLRIIDFTSTTKIPWRKKNYILIILWKYGEKIERLLYSRLEHFGRANVPKRYFRLVDGKILSMLFLVFILFPAFTSHIWSFRLGYEEIQVGKEITFNENLCEYRTAWLYDFKASMVCTIKYGYGKVNIRLNSTNPMEAGVEVQRFISQIPYDYARLESGFSYIQTPRETIGRRIGVCSDFAILTAQVLLDNNVSPVYIIHTLFKGDITGGHATAALFINGTLWIFDWGSAPVTFSEYLDTIDRLWEVREVRVYRLTESSIVLDRVYKGEPESDAWRYVYTLTMLIGIFIIKRREWLWI</sequence>
<accession>Q8U0T6</accession>
<dbReference type="EMBL" id="AE009950">
    <property type="protein sequence ID" value="AAL81620.1"/>
    <property type="molecule type" value="Genomic_DNA"/>
</dbReference>
<dbReference type="RefSeq" id="WP_011012643.1">
    <property type="nucleotide sequence ID" value="NZ_CP023154.1"/>
</dbReference>
<dbReference type="SMR" id="Q8U0T6"/>
<dbReference type="STRING" id="186497.PF1496"/>
<dbReference type="PaxDb" id="186497-PF1496"/>
<dbReference type="KEGG" id="pfu:PF1496"/>
<dbReference type="PATRIC" id="fig|186497.12.peg.1559"/>
<dbReference type="eggNOG" id="arCOG07144">
    <property type="taxonomic scope" value="Archaea"/>
</dbReference>
<dbReference type="HOGENOM" id="CLU_788987_0_0_2"/>
<dbReference type="OrthoDB" id="86147at2157"/>
<dbReference type="Proteomes" id="UP000001013">
    <property type="component" value="Chromosome"/>
</dbReference>
<dbReference type="GO" id="GO:0016020">
    <property type="term" value="C:membrane"/>
    <property type="evidence" value="ECO:0007669"/>
    <property type="project" value="UniProtKB-SubCell"/>
</dbReference>
<dbReference type="Gene3D" id="3.10.620.30">
    <property type="match status" value="1"/>
</dbReference>
<dbReference type="InterPro" id="IPR007562">
    <property type="entry name" value="Transglutaminase-like_domain"/>
</dbReference>
<dbReference type="Pfam" id="PF04473">
    <property type="entry name" value="DUF553"/>
    <property type="match status" value="1"/>
</dbReference>
<keyword id="KW-0472">Membrane</keyword>
<keyword id="KW-1185">Reference proteome</keyword>
<keyword id="KW-0812">Transmembrane</keyword>
<keyword id="KW-1133">Transmembrane helix</keyword>
<evidence type="ECO:0000255" key="1"/>
<evidence type="ECO:0000305" key="2"/>
<proteinExistence type="inferred from homology"/>
<name>Y1496_PYRFU</name>
<protein>
    <recommendedName>
        <fullName>UPF0252 protein PF1496</fullName>
    </recommendedName>
</protein>
<gene>
    <name type="ordered locus">PF1496</name>
</gene>
<feature type="chain" id="PRO_0000159559" description="UPF0252 protein PF1496">
    <location>
        <begin position="1"/>
        <end position="338"/>
    </location>
</feature>
<feature type="transmembrane region" description="Helical" evidence="1">
    <location>
        <begin position="100"/>
        <end position="120"/>
    </location>
</feature>
<comment type="subcellular location">
    <subcellularLocation>
        <location evidence="2">Membrane</location>
        <topology evidence="2">Single-pass membrane protein</topology>
    </subcellularLocation>
</comment>
<comment type="similarity">
    <text evidence="2">Belongs to the UPF0252 family.</text>
</comment>
<organism>
    <name type="scientific">Pyrococcus furiosus (strain ATCC 43587 / DSM 3638 / JCM 8422 / Vc1)</name>
    <dbReference type="NCBI Taxonomy" id="186497"/>
    <lineage>
        <taxon>Archaea</taxon>
        <taxon>Methanobacteriati</taxon>
        <taxon>Methanobacteriota</taxon>
        <taxon>Thermococci</taxon>
        <taxon>Thermococcales</taxon>
        <taxon>Thermococcaceae</taxon>
        <taxon>Pyrococcus</taxon>
    </lineage>
</organism>
<reference key="1">
    <citation type="journal article" date="1999" name="Genetics">
        <title>Divergence of the hyperthermophilic archaea Pyrococcus furiosus and P. horikoshii inferred from complete genomic sequences.</title>
        <authorList>
            <person name="Maeder D.L."/>
            <person name="Weiss R.B."/>
            <person name="Dunn D.M."/>
            <person name="Cherry J.L."/>
            <person name="Gonzalez J.M."/>
            <person name="DiRuggiero J."/>
            <person name="Robb F.T."/>
        </authorList>
    </citation>
    <scope>NUCLEOTIDE SEQUENCE [LARGE SCALE GENOMIC DNA]</scope>
    <source>
        <strain>ATCC 43587 / DSM 3638 / JCM 8422 / Vc1</strain>
    </source>
</reference>